<sequence length="391" mass="42864">MCSQLWFLTDRRIREDYPQVQILRALRQRCSEQDVRFRAVLMDQIAVTIVGGHLGLQLNQKALTTFPDVVLVRVPTPSVQSDSDITVLRHLEKLGCRLVNRPQSILNCINKFWTFQELAGHGVPMPDTFSYGGHEDFSKMIDEAEPLGYPVVVKSTRGHRGKAVFLARDKHHLSDICHLIRHDVPYLFQKYVKESHGKDIRVVVVGGQVIGSMLRCSTDGRMQSNCSLGGVGVKCPLTEQGKQLAIQVSNILGMDFCGIDLLIMDDGSFVVCEANANVGFLAFDQACNLDVGGIIADYTMSLLPNRQTGKMAVLPGLSSPREKNEPDGCASAQGVAESVYTINSGSTSSESEPELGEIRDSSASTMGAPPSMLPEPGYNINNRIASELKLK</sequence>
<comment type="function">
    <text evidence="2">Catalyzes the synthesis of N-acetyl-L-aspartyl-L-glutamate (NAAG) and N-acetyl-L-aspartyl-L-glutamyl-L-glutamate.</text>
</comment>
<comment type="catalytic activity">
    <reaction evidence="2">
        <text>N-acetyl-L-aspartate + L-glutamate + ATP = N-acetyl-L-aspartyl-L-glutamate + ADP + phosphate + H(+)</text>
        <dbReference type="Rhea" id="RHEA:40035"/>
        <dbReference type="ChEBI" id="CHEBI:15378"/>
        <dbReference type="ChEBI" id="CHEBI:16953"/>
        <dbReference type="ChEBI" id="CHEBI:29985"/>
        <dbReference type="ChEBI" id="CHEBI:30616"/>
        <dbReference type="ChEBI" id="CHEBI:43474"/>
        <dbReference type="ChEBI" id="CHEBI:76931"/>
        <dbReference type="ChEBI" id="CHEBI:456216"/>
        <dbReference type="EC" id="6.3.2.41"/>
    </reaction>
</comment>
<comment type="catalytic activity">
    <reaction evidence="2">
        <text>N-acetyl-L-aspartate + 2 L-glutamate + 2 ATP = N-acetyl-L-aspartyl-L-glutamyl-L-glutamate + 2 ADP + 2 phosphate + 2 H(+)</text>
        <dbReference type="Rhea" id="RHEA:40039"/>
        <dbReference type="ChEBI" id="CHEBI:15378"/>
        <dbReference type="ChEBI" id="CHEBI:16953"/>
        <dbReference type="ChEBI" id="CHEBI:29985"/>
        <dbReference type="ChEBI" id="CHEBI:30616"/>
        <dbReference type="ChEBI" id="CHEBI:43474"/>
        <dbReference type="ChEBI" id="CHEBI:76935"/>
        <dbReference type="ChEBI" id="CHEBI:456216"/>
        <dbReference type="EC" id="6.3.2.42"/>
    </reaction>
</comment>
<comment type="cofactor">
    <cofactor evidence="1">
        <name>Mg(2+)</name>
        <dbReference type="ChEBI" id="CHEBI:18420"/>
    </cofactor>
    <cofactor evidence="1">
        <name>Mn(2+)</name>
        <dbReference type="ChEBI" id="CHEBI:29035"/>
    </cofactor>
    <text evidence="1">Binds 2 magnesium or manganese ions per subunit.</text>
</comment>
<comment type="interaction">
    <interactant intactId="EBI-21890191">
        <id>Q8IXN7</id>
    </interactant>
    <interactant intactId="EBI-348399">
        <id>P22607</id>
        <label>FGFR3</label>
    </interactant>
    <organismsDiffer>false</organismsDiffer>
    <experiments>3</experiments>
</comment>
<comment type="interaction">
    <interactant intactId="EBI-21890191">
        <id>Q8IXN7</id>
    </interactant>
    <interactant intactId="EBI-351506">
        <id>P06396</id>
        <label>GSN</label>
    </interactant>
    <organismsDiffer>false</organismsDiffer>
    <experiments>3</experiments>
</comment>
<comment type="interaction">
    <interactant intactId="EBI-21890191">
        <id>Q8IXN7</id>
    </interactant>
    <interactant intactId="EBI-350145">
        <id>P01112</id>
        <label>HRAS</label>
    </interactant>
    <organismsDiffer>false</organismsDiffer>
    <experiments>3</experiments>
</comment>
<comment type="interaction">
    <interactant intactId="EBI-21890191">
        <id>Q8IXN7</id>
    </interactant>
    <interactant intactId="EBI-466029">
        <id>P42858</id>
        <label>HTT</label>
    </interactant>
    <organismsDiffer>false</organismsDiffer>
    <experiments>3</experiments>
</comment>
<comment type="subcellular location">
    <subcellularLocation>
        <location evidence="5">Cytoplasm</location>
    </subcellularLocation>
</comment>
<comment type="miscellaneous">
    <text evidence="2">N-acetyl-L-aspartyl-L-glutamate (NAAG) is the most abundant dipeptide present in vertebrate central nervous system (CNS).</text>
</comment>
<comment type="similarity">
    <text evidence="5">Belongs to the RimK family.</text>
</comment>
<comment type="sequence caution" evidence="5">
    <conflict type="erroneous initiation">
        <sequence resource="EMBL-CDS" id="AAH39737"/>
    </conflict>
    <text>Truncated N-terminus.</text>
</comment>
<dbReference type="EC" id="6.3.2.41" evidence="2"/>
<dbReference type="EC" id="6.3.2.42" evidence="2"/>
<dbReference type="EMBL" id="AL513331">
    <property type="status" value="NOT_ANNOTATED_CDS"/>
    <property type="molecule type" value="Genomic_DNA"/>
</dbReference>
<dbReference type="EMBL" id="BC039737">
    <property type="protein sequence ID" value="AAH39737.1"/>
    <property type="status" value="ALT_INIT"/>
    <property type="molecule type" value="mRNA"/>
</dbReference>
<dbReference type="CCDS" id="CCDS466.2"/>
<dbReference type="RefSeq" id="NP_775913.2">
    <property type="nucleotide sequence ID" value="NM_173642.4"/>
</dbReference>
<dbReference type="SMR" id="Q8IXN7"/>
<dbReference type="BioGRID" id="129940">
    <property type="interactions" value="125"/>
</dbReference>
<dbReference type="FunCoup" id="Q8IXN7">
    <property type="interactions" value="124"/>
</dbReference>
<dbReference type="IntAct" id="Q8IXN7">
    <property type="interactions" value="10"/>
</dbReference>
<dbReference type="STRING" id="9606.ENSP00000414330"/>
<dbReference type="BindingDB" id="Q8IXN7"/>
<dbReference type="iPTMnet" id="Q8IXN7"/>
<dbReference type="PhosphoSitePlus" id="Q8IXN7"/>
<dbReference type="BioMuta" id="RIMKLA"/>
<dbReference type="DMDM" id="143458650"/>
<dbReference type="jPOST" id="Q8IXN7"/>
<dbReference type="MassIVE" id="Q8IXN7"/>
<dbReference type="PaxDb" id="9606-ENSP00000414330"/>
<dbReference type="PeptideAtlas" id="Q8IXN7"/>
<dbReference type="ProteomicsDB" id="71034"/>
<dbReference type="Antibodypedia" id="32199">
    <property type="antibodies" value="82 antibodies from 21 providers"/>
</dbReference>
<dbReference type="DNASU" id="284716"/>
<dbReference type="Ensembl" id="ENST00000431473.4">
    <property type="protein sequence ID" value="ENSP00000414330.2"/>
    <property type="gene ID" value="ENSG00000177181.15"/>
</dbReference>
<dbReference type="GeneID" id="284716"/>
<dbReference type="KEGG" id="hsa:284716"/>
<dbReference type="MANE-Select" id="ENST00000431473.4">
    <property type="protein sequence ID" value="ENSP00000414330.2"/>
    <property type="RefSeq nucleotide sequence ID" value="NM_173642.4"/>
    <property type="RefSeq protein sequence ID" value="NP_775913.2"/>
</dbReference>
<dbReference type="UCSC" id="uc001chi.3">
    <property type="organism name" value="human"/>
</dbReference>
<dbReference type="AGR" id="HGNC:28725"/>
<dbReference type="CTD" id="284716"/>
<dbReference type="DisGeNET" id="284716"/>
<dbReference type="GeneCards" id="RIMKLA"/>
<dbReference type="HGNC" id="HGNC:28725">
    <property type="gene designation" value="RIMKLA"/>
</dbReference>
<dbReference type="HPA" id="ENSG00000177181">
    <property type="expression patterns" value="Tissue enhanced (brain, retina)"/>
</dbReference>
<dbReference type="MIM" id="618949">
    <property type="type" value="gene"/>
</dbReference>
<dbReference type="neXtProt" id="NX_Q8IXN7"/>
<dbReference type="OpenTargets" id="ENSG00000177181"/>
<dbReference type="PharmGKB" id="PA164725339"/>
<dbReference type="VEuPathDB" id="HostDB:ENSG00000177181"/>
<dbReference type="eggNOG" id="ENOG502QT4M">
    <property type="taxonomic scope" value="Eukaryota"/>
</dbReference>
<dbReference type="GeneTree" id="ENSGT00390000014577"/>
<dbReference type="HOGENOM" id="CLU_054353_3_1_1"/>
<dbReference type="InParanoid" id="Q8IXN7"/>
<dbReference type="OMA" id="EKHGVMV"/>
<dbReference type="OrthoDB" id="10265738at2759"/>
<dbReference type="PAN-GO" id="Q8IXN7">
    <property type="GO annotations" value="2 GO annotations based on evolutionary models"/>
</dbReference>
<dbReference type="PhylomeDB" id="Q8IXN7"/>
<dbReference type="TreeFam" id="TF332035"/>
<dbReference type="PathwayCommons" id="Q8IXN7"/>
<dbReference type="Reactome" id="R-HSA-8964539">
    <property type="pathway name" value="Glutamate and glutamine metabolism"/>
</dbReference>
<dbReference type="SignaLink" id="Q8IXN7"/>
<dbReference type="BioGRID-ORCS" id="284716">
    <property type="hits" value="14 hits in 1148 CRISPR screens"/>
</dbReference>
<dbReference type="ChiTaRS" id="RIMKLA">
    <property type="organism name" value="human"/>
</dbReference>
<dbReference type="GenomeRNAi" id="284716"/>
<dbReference type="Pharos" id="Q8IXN7">
    <property type="development level" value="Tdark"/>
</dbReference>
<dbReference type="PRO" id="PR:Q8IXN7"/>
<dbReference type="Proteomes" id="UP000005640">
    <property type="component" value="Chromosome 1"/>
</dbReference>
<dbReference type="RNAct" id="Q8IXN7">
    <property type="molecule type" value="protein"/>
</dbReference>
<dbReference type="Bgee" id="ENSG00000177181">
    <property type="expression patterns" value="Expressed in secondary oocyte and 130 other cell types or tissues"/>
</dbReference>
<dbReference type="ExpressionAtlas" id="Q8IXN7">
    <property type="expression patterns" value="baseline and differential"/>
</dbReference>
<dbReference type="GO" id="GO:0005737">
    <property type="term" value="C:cytoplasm"/>
    <property type="evidence" value="ECO:0000318"/>
    <property type="project" value="GO_Central"/>
</dbReference>
<dbReference type="GO" id="GO:0005829">
    <property type="term" value="C:cytosol"/>
    <property type="evidence" value="ECO:0000304"/>
    <property type="project" value="Reactome"/>
</dbReference>
<dbReference type="GO" id="GO:0005524">
    <property type="term" value="F:ATP binding"/>
    <property type="evidence" value="ECO:0007669"/>
    <property type="project" value="UniProtKB-KW"/>
</dbReference>
<dbReference type="GO" id="GO:0046872">
    <property type="term" value="F:metal ion binding"/>
    <property type="evidence" value="ECO:0007669"/>
    <property type="project" value="UniProtKB-KW"/>
</dbReference>
<dbReference type="GO" id="GO:0072590">
    <property type="term" value="F:N-acetyl-L-aspartate-L-glutamate ligase activity"/>
    <property type="evidence" value="ECO:0000250"/>
    <property type="project" value="UniProtKB"/>
</dbReference>
<dbReference type="GO" id="GO:0009064">
    <property type="term" value="P:glutamine family amino acid metabolic process"/>
    <property type="evidence" value="ECO:0000304"/>
    <property type="project" value="Reactome"/>
</dbReference>
<dbReference type="GO" id="GO:0036211">
    <property type="term" value="P:protein modification process"/>
    <property type="evidence" value="ECO:0007669"/>
    <property type="project" value="InterPro"/>
</dbReference>
<dbReference type="FunFam" id="3.30.1490.20:FF:000011">
    <property type="entry name" value="beta-citrylglutamate synthase B isoform X1"/>
    <property type="match status" value="1"/>
</dbReference>
<dbReference type="FunFam" id="3.30.470.20:FF:000022">
    <property type="entry name" value="beta-citrylglutamate synthase B isoform X1"/>
    <property type="match status" value="1"/>
</dbReference>
<dbReference type="FunFam" id="3.40.50.20:FF:000014">
    <property type="entry name" value="beta-citrylglutamate synthase B isoform X1"/>
    <property type="match status" value="1"/>
</dbReference>
<dbReference type="Gene3D" id="3.40.50.20">
    <property type="match status" value="1"/>
</dbReference>
<dbReference type="Gene3D" id="3.30.1490.20">
    <property type="entry name" value="ATP-grasp fold, A domain"/>
    <property type="match status" value="1"/>
</dbReference>
<dbReference type="Gene3D" id="3.30.470.20">
    <property type="entry name" value="ATP-grasp fold, B domain"/>
    <property type="match status" value="1"/>
</dbReference>
<dbReference type="InterPro" id="IPR011761">
    <property type="entry name" value="ATP-grasp"/>
</dbReference>
<dbReference type="InterPro" id="IPR013651">
    <property type="entry name" value="ATP-grasp_RimK-type"/>
</dbReference>
<dbReference type="InterPro" id="IPR013815">
    <property type="entry name" value="ATP_grasp_subdomain_1"/>
</dbReference>
<dbReference type="InterPro" id="IPR004666">
    <property type="entry name" value="Rp_bS6_RimK/Lys_biosynth_LsyX"/>
</dbReference>
<dbReference type="NCBIfam" id="TIGR00768">
    <property type="entry name" value="rimK_fam"/>
    <property type="match status" value="1"/>
</dbReference>
<dbReference type="PANTHER" id="PTHR21621:SF1">
    <property type="entry name" value="N-ACETYLASPARTYLGLUTAMATE SYNTHASE A"/>
    <property type="match status" value="1"/>
</dbReference>
<dbReference type="PANTHER" id="PTHR21621">
    <property type="entry name" value="RIBOSOMAL PROTEIN S6 MODIFICATION PROTEIN"/>
    <property type="match status" value="1"/>
</dbReference>
<dbReference type="Pfam" id="PF08443">
    <property type="entry name" value="RimK"/>
    <property type="match status" value="1"/>
</dbReference>
<dbReference type="SUPFAM" id="SSF56059">
    <property type="entry name" value="Glutathione synthetase ATP-binding domain-like"/>
    <property type="match status" value="1"/>
</dbReference>
<dbReference type="PROSITE" id="PS50975">
    <property type="entry name" value="ATP_GRASP"/>
    <property type="match status" value="1"/>
</dbReference>
<feature type="chain" id="PRO_0000282568" description="N-acetylaspartylglutamate synthase A">
    <location>
        <begin position="1"/>
        <end position="391"/>
    </location>
</feature>
<feature type="domain" description="ATP-grasp" evidence="3">
    <location>
        <begin position="115"/>
        <end position="300"/>
    </location>
</feature>
<feature type="region of interest" description="Disordered" evidence="4">
    <location>
        <begin position="341"/>
        <end position="379"/>
    </location>
</feature>
<feature type="compositionally biased region" description="Polar residues" evidence="4">
    <location>
        <begin position="341"/>
        <end position="350"/>
    </location>
</feature>
<feature type="binding site" evidence="1">
    <location>
        <position position="154"/>
    </location>
    <ligand>
        <name>ATP</name>
        <dbReference type="ChEBI" id="CHEBI:30616"/>
    </ligand>
</feature>
<feature type="binding site" evidence="3">
    <location>
        <begin position="189"/>
        <end position="199"/>
    </location>
    <ligand>
        <name>ATP</name>
        <dbReference type="ChEBI" id="CHEBI:30616"/>
    </ligand>
</feature>
<feature type="binding site" evidence="1">
    <location>
        <position position="215"/>
    </location>
    <ligand>
        <name>ATP</name>
        <dbReference type="ChEBI" id="CHEBI:30616"/>
    </ligand>
</feature>
<feature type="binding site" evidence="3">
    <location>
        <position position="260"/>
    </location>
    <ligand>
        <name>Mg(2+)</name>
        <dbReference type="ChEBI" id="CHEBI:18420"/>
        <label>1</label>
    </ligand>
</feature>
<feature type="binding site" evidence="3">
    <location>
        <position position="260"/>
    </location>
    <ligand>
        <name>Mn(2+)</name>
        <dbReference type="ChEBI" id="CHEBI:29035"/>
        <label>1</label>
    </ligand>
</feature>
<feature type="binding site" evidence="3">
    <location>
        <position position="273"/>
    </location>
    <ligand>
        <name>Mg(2+)</name>
        <dbReference type="ChEBI" id="CHEBI:18420"/>
        <label>1</label>
    </ligand>
</feature>
<feature type="binding site" evidence="3">
    <location>
        <position position="273"/>
    </location>
    <ligand>
        <name>Mg(2+)</name>
        <dbReference type="ChEBI" id="CHEBI:18420"/>
        <label>2</label>
    </ligand>
</feature>
<feature type="binding site" evidence="3">
    <location>
        <position position="273"/>
    </location>
    <ligand>
        <name>Mn(2+)</name>
        <dbReference type="ChEBI" id="CHEBI:29035"/>
        <label>1</label>
    </ligand>
</feature>
<feature type="binding site" evidence="3">
    <location>
        <position position="273"/>
    </location>
    <ligand>
        <name>Mn(2+)</name>
        <dbReference type="ChEBI" id="CHEBI:29035"/>
        <label>2</label>
    </ligand>
</feature>
<feature type="binding site" evidence="3">
    <location>
        <position position="275"/>
    </location>
    <ligand>
        <name>Mg(2+)</name>
        <dbReference type="ChEBI" id="CHEBI:18420"/>
        <label>2</label>
    </ligand>
</feature>
<feature type="binding site" evidence="3">
    <location>
        <position position="275"/>
    </location>
    <ligand>
        <name>Mn(2+)</name>
        <dbReference type="ChEBI" id="CHEBI:29035"/>
        <label>2</label>
    </ligand>
</feature>
<feature type="modified residue" description="Phosphoserine" evidence="2">
    <location>
        <position position="319"/>
    </location>
</feature>
<proteinExistence type="evidence at protein level"/>
<keyword id="KW-0067">ATP-binding</keyword>
<keyword id="KW-0963">Cytoplasm</keyword>
<keyword id="KW-0436">Ligase</keyword>
<keyword id="KW-0460">Magnesium</keyword>
<keyword id="KW-0464">Manganese</keyword>
<keyword id="KW-0479">Metal-binding</keyword>
<keyword id="KW-0547">Nucleotide-binding</keyword>
<keyword id="KW-0597">Phosphoprotein</keyword>
<keyword id="KW-1267">Proteomics identification</keyword>
<keyword id="KW-1185">Reference proteome</keyword>
<organism>
    <name type="scientific">Homo sapiens</name>
    <name type="common">Human</name>
    <dbReference type="NCBI Taxonomy" id="9606"/>
    <lineage>
        <taxon>Eukaryota</taxon>
        <taxon>Metazoa</taxon>
        <taxon>Chordata</taxon>
        <taxon>Craniata</taxon>
        <taxon>Vertebrata</taxon>
        <taxon>Euteleostomi</taxon>
        <taxon>Mammalia</taxon>
        <taxon>Eutheria</taxon>
        <taxon>Euarchontoglires</taxon>
        <taxon>Primates</taxon>
        <taxon>Haplorrhini</taxon>
        <taxon>Catarrhini</taxon>
        <taxon>Hominidae</taxon>
        <taxon>Homo</taxon>
    </lineage>
</organism>
<gene>
    <name type="primary">RIMKLA</name>
    <name type="synonym">FAM80A</name>
</gene>
<name>RIMKA_HUMAN</name>
<accession>Q8IXN7</accession>
<accession>Q5VUS5</accession>
<evidence type="ECO:0000250" key="1"/>
<evidence type="ECO:0000250" key="2">
    <source>
        <dbReference type="UniProtKB" id="Q6PFX8"/>
    </source>
</evidence>
<evidence type="ECO:0000255" key="3">
    <source>
        <dbReference type="PROSITE-ProRule" id="PRU00409"/>
    </source>
</evidence>
<evidence type="ECO:0000256" key="4">
    <source>
        <dbReference type="SAM" id="MobiDB-lite"/>
    </source>
</evidence>
<evidence type="ECO:0000305" key="5"/>
<reference key="1">
    <citation type="journal article" date="2006" name="Nature">
        <title>The DNA sequence and biological annotation of human chromosome 1.</title>
        <authorList>
            <person name="Gregory S.G."/>
            <person name="Barlow K.F."/>
            <person name="McLay K.E."/>
            <person name="Kaul R."/>
            <person name="Swarbreck D."/>
            <person name="Dunham A."/>
            <person name="Scott C.E."/>
            <person name="Howe K.L."/>
            <person name="Woodfine K."/>
            <person name="Spencer C.C.A."/>
            <person name="Jones M.C."/>
            <person name="Gillson C."/>
            <person name="Searle S."/>
            <person name="Zhou Y."/>
            <person name="Kokocinski F."/>
            <person name="McDonald L."/>
            <person name="Evans R."/>
            <person name="Phillips K."/>
            <person name="Atkinson A."/>
            <person name="Cooper R."/>
            <person name="Jones C."/>
            <person name="Hall R.E."/>
            <person name="Andrews T.D."/>
            <person name="Lloyd C."/>
            <person name="Ainscough R."/>
            <person name="Almeida J.P."/>
            <person name="Ambrose K.D."/>
            <person name="Anderson F."/>
            <person name="Andrew R.W."/>
            <person name="Ashwell R.I.S."/>
            <person name="Aubin K."/>
            <person name="Babbage A.K."/>
            <person name="Bagguley C.L."/>
            <person name="Bailey J."/>
            <person name="Beasley H."/>
            <person name="Bethel G."/>
            <person name="Bird C.P."/>
            <person name="Bray-Allen S."/>
            <person name="Brown J.Y."/>
            <person name="Brown A.J."/>
            <person name="Buckley D."/>
            <person name="Burton J."/>
            <person name="Bye J."/>
            <person name="Carder C."/>
            <person name="Chapman J.C."/>
            <person name="Clark S.Y."/>
            <person name="Clarke G."/>
            <person name="Clee C."/>
            <person name="Cobley V."/>
            <person name="Collier R.E."/>
            <person name="Corby N."/>
            <person name="Coville G.J."/>
            <person name="Davies J."/>
            <person name="Deadman R."/>
            <person name="Dunn M."/>
            <person name="Earthrowl M."/>
            <person name="Ellington A.G."/>
            <person name="Errington H."/>
            <person name="Frankish A."/>
            <person name="Frankland J."/>
            <person name="French L."/>
            <person name="Garner P."/>
            <person name="Garnett J."/>
            <person name="Gay L."/>
            <person name="Ghori M.R.J."/>
            <person name="Gibson R."/>
            <person name="Gilby L.M."/>
            <person name="Gillett W."/>
            <person name="Glithero R.J."/>
            <person name="Grafham D.V."/>
            <person name="Griffiths C."/>
            <person name="Griffiths-Jones S."/>
            <person name="Grocock R."/>
            <person name="Hammond S."/>
            <person name="Harrison E.S.I."/>
            <person name="Hart E."/>
            <person name="Haugen E."/>
            <person name="Heath P.D."/>
            <person name="Holmes S."/>
            <person name="Holt K."/>
            <person name="Howden P.J."/>
            <person name="Hunt A.R."/>
            <person name="Hunt S.E."/>
            <person name="Hunter G."/>
            <person name="Isherwood J."/>
            <person name="James R."/>
            <person name="Johnson C."/>
            <person name="Johnson D."/>
            <person name="Joy A."/>
            <person name="Kay M."/>
            <person name="Kershaw J.K."/>
            <person name="Kibukawa M."/>
            <person name="Kimberley A.M."/>
            <person name="King A."/>
            <person name="Knights A.J."/>
            <person name="Lad H."/>
            <person name="Laird G."/>
            <person name="Lawlor S."/>
            <person name="Leongamornlert D.A."/>
            <person name="Lloyd D.M."/>
            <person name="Loveland J."/>
            <person name="Lovell J."/>
            <person name="Lush M.J."/>
            <person name="Lyne R."/>
            <person name="Martin S."/>
            <person name="Mashreghi-Mohammadi M."/>
            <person name="Matthews L."/>
            <person name="Matthews N.S.W."/>
            <person name="McLaren S."/>
            <person name="Milne S."/>
            <person name="Mistry S."/>
            <person name="Moore M.J.F."/>
            <person name="Nickerson T."/>
            <person name="O'Dell C.N."/>
            <person name="Oliver K."/>
            <person name="Palmeiri A."/>
            <person name="Palmer S.A."/>
            <person name="Parker A."/>
            <person name="Patel D."/>
            <person name="Pearce A.V."/>
            <person name="Peck A.I."/>
            <person name="Pelan S."/>
            <person name="Phelps K."/>
            <person name="Phillimore B.J."/>
            <person name="Plumb R."/>
            <person name="Rajan J."/>
            <person name="Raymond C."/>
            <person name="Rouse G."/>
            <person name="Saenphimmachak C."/>
            <person name="Sehra H.K."/>
            <person name="Sheridan E."/>
            <person name="Shownkeen R."/>
            <person name="Sims S."/>
            <person name="Skuce C.D."/>
            <person name="Smith M."/>
            <person name="Steward C."/>
            <person name="Subramanian S."/>
            <person name="Sycamore N."/>
            <person name="Tracey A."/>
            <person name="Tromans A."/>
            <person name="Van Helmond Z."/>
            <person name="Wall M."/>
            <person name="Wallis J.M."/>
            <person name="White S."/>
            <person name="Whitehead S.L."/>
            <person name="Wilkinson J.E."/>
            <person name="Willey D.L."/>
            <person name="Williams H."/>
            <person name="Wilming L."/>
            <person name="Wray P.W."/>
            <person name="Wu Z."/>
            <person name="Coulson A."/>
            <person name="Vaudin M."/>
            <person name="Sulston J.E."/>
            <person name="Durbin R.M."/>
            <person name="Hubbard T."/>
            <person name="Wooster R."/>
            <person name="Dunham I."/>
            <person name="Carter N.P."/>
            <person name="McVean G."/>
            <person name="Ross M.T."/>
            <person name="Harrow J."/>
            <person name="Olson M.V."/>
            <person name="Beck S."/>
            <person name="Rogers J."/>
            <person name="Bentley D.R."/>
        </authorList>
    </citation>
    <scope>NUCLEOTIDE SEQUENCE [LARGE SCALE GENOMIC DNA]</scope>
</reference>
<reference key="2">
    <citation type="journal article" date="2004" name="Genome Res.">
        <title>The status, quality, and expansion of the NIH full-length cDNA project: the Mammalian Gene Collection (MGC).</title>
        <authorList>
            <consortium name="The MGC Project Team"/>
        </authorList>
    </citation>
    <scope>NUCLEOTIDE SEQUENCE [LARGE SCALE MRNA]</scope>
    <source>
        <tissue>Pancreas</tissue>
    </source>
</reference>
<protein>
    <recommendedName>
        <fullName>N-acetylaspartylglutamate synthase A</fullName>
        <shortName>NAAG synthetase A</shortName>
        <shortName>NAAGS</shortName>
        <ecNumber evidence="2">6.3.2.41</ecNumber>
    </recommendedName>
    <alternativeName>
        <fullName>N-acetylaspartylglutamylglutamate synthase A</fullName>
        <ecNumber evidence="2">6.3.2.42</ecNumber>
    </alternativeName>
    <alternativeName>
        <fullName>Ribosomal protein S6 modification-like protein A</fullName>
    </alternativeName>
</protein>